<feature type="chain" id="PRO_1000164670" description="Orotate phosphoribosyltransferase">
    <location>
        <begin position="1"/>
        <end position="210"/>
    </location>
</feature>
<feature type="binding site" evidence="1">
    <location>
        <position position="94"/>
    </location>
    <ligand>
        <name>5-phospho-alpha-D-ribose 1-diphosphate</name>
        <dbReference type="ChEBI" id="CHEBI:58017"/>
        <note>ligand shared between dimeric partners</note>
    </ligand>
</feature>
<feature type="binding site" evidence="1">
    <location>
        <position position="98"/>
    </location>
    <ligand>
        <name>5-phospho-alpha-D-ribose 1-diphosphate</name>
        <dbReference type="ChEBI" id="CHEBI:58017"/>
        <note>ligand shared between dimeric partners</note>
    </ligand>
</feature>
<feature type="binding site" evidence="1">
    <location>
        <position position="100"/>
    </location>
    <ligand>
        <name>5-phospho-alpha-D-ribose 1-diphosphate</name>
        <dbReference type="ChEBI" id="CHEBI:58017"/>
        <note>ligand shared between dimeric partners</note>
    </ligand>
</feature>
<feature type="binding site" description="in other chain" evidence="1">
    <location>
        <begin position="120"/>
        <end position="128"/>
    </location>
    <ligand>
        <name>5-phospho-alpha-D-ribose 1-diphosphate</name>
        <dbReference type="ChEBI" id="CHEBI:58017"/>
        <note>ligand shared between dimeric partners</note>
    </ligand>
</feature>
<feature type="binding site" evidence="1">
    <location>
        <position position="124"/>
    </location>
    <ligand>
        <name>orotate</name>
        <dbReference type="ChEBI" id="CHEBI:30839"/>
    </ligand>
</feature>
<organism>
    <name type="scientific">Bacillus anthracis (strain CDC 684 / NRRL 3495)</name>
    <dbReference type="NCBI Taxonomy" id="568206"/>
    <lineage>
        <taxon>Bacteria</taxon>
        <taxon>Bacillati</taxon>
        <taxon>Bacillota</taxon>
        <taxon>Bacilli</taxon>
        <taxon>Bacillales</taxon>
        <taxon>Bacillaceae</taxon>
        <taxon>Bacillus</taxon>
        <taxon>Bacillus cereus group</taxon>
    </lineage>
</organism>
<sequence length="210" mass="22714">MKKEIASHLLEIGAVFLQPNDPFTWSSGMKSPIYCDNRLTLSYPKVRQTIAAGLEELIKEHFPTVEVIAGTATAGIAHAAWVSDRMDLPMCYVRSKAKGHGKGNQIEGKAEKGQKVVVVEDLISTGGSAITCVEALREAGCEVLGIVSIFTYELEAGKEKLEAANVASYSLSDYSALTEVAAEKGIIGQAETKKLQEWRKNPADEAWITA</sequence>
<accession>C3L744</accession>
<protein>
    <recommendedName>
        <fullName evidence="1">Orotate phosphoribosyltransferase</fullName>
        <shortName evidence="1">OPRT</shortName>
        <shortName evidence="1">OPRTase</shortName>
        <ecNumber evidence="1">2.4.2.10</ecNumber>
    </recommendedName>
</protein>
<evidence type="ECO:0000255" key="1">
    <source>
        <dbReference type="HAMAP-Rule" id="MF_01208"/>
    </source>
</evidence>
<dbReference type="EC" id="2.4.2.10" evidence="1"/>
<dbReference type="EMBL" id="CP001215">
    <property type="protein sequence ID" value="ACP16147.1"/>
    <property type="molecule type" value="Genomic_DNA"/>
</dbReference>
<dbReference type="RefSeq" id="WP_000711466.1">
    <property type="nucleotide sequence ID" value="NC_012581.1"/>
</dbReference>
<dbReference type="SMR" id="C3L744"/>
<dbReference type="GeneID" id="45023711"/>
<dbReference type="KEGG" id="bah:BAMEG_0610"/>
<dbReference type="HOGENOM" id="CLU_074878_1_1_9"/>
<dbReference type="UniPathway" id="UPA00070">
    <property type="reaction ID" value="UER00119"/>
</dbReference>
<dbReference type="GO" id="GO:0000287">
    <property type="term" value="F:magnesium ion binding"/>
    <property type="evidence" value="ECO:0007669"/>
    <property type="project" value="UniProtKB-UniRule"/>
</dbReference>
<dbReference type="GO" id="GO:0004588">
    <property type="term" value="F:orotate phosphoribosyltransferase activity"/>
    <property type="evidence" value="ECO:0007669"/>
    <property type="project" value="UniProtKB-UniRule"/>
</dbReference>
<dbReference type="GO" id="GO:0044205">
    <property type="term" value="P:'de novo' UMP biosynthetic process"/>
    <property type="evidence" value="ECO:0007669"/>
    <property type="project" value="UniProtKB-UniRule"/>
</dbReference>
<dbReference type="GO" id="GO:0019856">
    <property type="term" value="P:pyrimidine nucleobase biosynthetic process"/>
    <property type="evidence" value="ECO:0007669"/>
    <property type="project" value="TreeGrafter"/>
</dbReference>
<dbReference type="CDD" id="cd06223">
    <property type="entry name" value="PRTases_typeI"/>
    <property type="match status" value="1"/>
</dbReference>
<dbReference type="Gene3D" id="3.40.50.2020">
    <property type="match status" value="1"/>
</dbReference>
<dbReference type="HAMAP" id="MF_01208">
    <property type="entry name" value="PyrE"/>
    <property type="match status" value="1"/>
</dbReference>
<dbReference type="InterPro" id="IPR023031">
    <property type="entry name" value="OPRT"/>
</dbReference>
<dbReference type="InterPro" id="IPR004467">
    <property type="entry name" value="Or_phspho_trans_dom"/>
</dbReference>
<dbReference type="InterPro" id="IPR000836">
    <property type="entry name" value="PRibTrfase_dom"/>
</dbReference>
<dbReference type="InterPro" id="IPR029057">
    <property type="entry name" value="PRTase-like"/>
</dbReference>
<dbReference type="NCBIfam" id="TIGR00336">
    <property type="entry name" value="pyrE"/>
    <property type="match status" value="1"/>
</dbReference>
<dbReference type="PANTHER" id="PTHR19278">
    <property type="entry name" value="OROTATE PHOSPHORIBOSYLTRANSFERASE"/>
    <property type="match status" value="1"/>
</dbReference>
<dbReference type="PANTHER" id="PTHR19278:SF9">
    <property type="entry name" value="URIDINE 5'-MONOPHOSPHATE SYNTHASE"/>
    <property type="match status" value="1"/>
</dbReference>
<dbReference type="Pfam" id="PF00156">
    <property type="entry name" value="Pribosyltran"/>
    <property type="match status" value="1"/>
</dbReference>
<dbReference type="SUPFAM" id="SSF53271">
    <property type="entry name" value="PRTase-like"/>
    <property type="match status" value="1"/>
</dbReference>
<dbReference type="PROSITE" id="PS00103">
    <property type="entry name" value="PUR_PYR_PR_TRANSFER"/>
    <property type="match status" value="1"/>
</dbReference>
<gene>
    <name evidence="1" type="primary">pyrE</name>
    <name type="ordered locus">BAMEG_0610</name>
</gene>
<reference key="1">
    <citation type="submission" date="2008-10" db="EMBL/GenBank/DDBJ databases">
        <title>Genome sequence of Bacillus anthracis str. CDC 684.</title>
        <authorList>
            <person name="Dodson R.J."/>
            <person name="Munk A.C."/>
            <person name="Brettin T."/>
            <person name="Bruce D."/>
            <person name="Detter C."/>
            <person name="Tapia R."/>
            <person name="Han C."/>
            <person name="Sutton G."/>
            <person name="Sims D."/>
        </authorList>
    </citation>
    <scope>NUCLEOTIDE SEQUENCE [LARGE SCALE GENOMIC DNA]</scope>
    <source>
        <strain>CDC 684 / NRRL 3495</strain>
    </source>
</reference>
<name>PYRE_BACAC</name>
<keyword id="KW-0328">Glycosyltransferase</keyword>
<keyword id="KW-0460">Magnesium</keyword>
<keyword id="KW-0665">Pyrimidine biosynthesis</keyword>
<keyword id="KW-0808">Transferase</keyword>
<comment type="function">
    <text evidence="1">Catalyzes the transfer of a ribosyl phosphate group from 5-phosphoribose 1-diphosphate to orotate, leading to the formation of orotidine monophosphate (OMP).</text>
</comment>
<comment type="catalytic activity">
    <reaction evidence="1">
        <text>orotidine 5'-phosphate + diphosphate = orotate + 5-phospho-alpha-D-ribose 1-diphosphate</text>
        <dbReference type="Rhea" id="RHEA:10380"/>
        <dbReference type="ChEBI" id="CHEBI:30839"/>
        <dbReference type="ChEBI" id="CHEBI:33019"/>
        <dbReference type="ChEBI" id="CHEBI:57538"/>
        <dbReference type="ChEBI" id="CHEBI:58017"/>
        <dbReference type="EC" id="2.4.2.10"/>
    </reaction>
</comment>
<comment type="cofactor">
    <cofactor evidence="1">
        <name>Mg(2+)</name>
        <dbReference type="ChEBI" id="CHEBI:18420"/>
    </cofactor>
</comment>
<comment type="pathway">
    <text evidence="1">Pyrimidine metabolism; UMP biosynthesis via de novo pathway; UMP from orotate: step 1/2.</text>
</comment>
<comment type="subunit">
    <text evidence="1">Homodimer.</text>
</comment>
<comment type="similarity">
    <text evidence="1">Belongs to the purine/pyrimidine phosphoribosyltransferase family. PyrE subfamily.</text>
</comment>
<proteinExistence type="inferred from homology"/>